<accession>Q2Y6Z3</accession>
<organism>
    <name type="scientific">Nitrosospira multiformis (strain ATCC 25196 / NCIMB 11849 / C 71)</name>
    <dbReference type="NCBI Taxonomy" id="323848"/>
    <lineage>
        <taxon>Bacteria</taxon>
        <taxon>Pseudomonadati</taxon>
        <taxon>Pseudomonadota</taxon>
        <taxon>Betaproteobacteria</taxon>
        <taxon>Nitrosomonadales</taxon>
        <taxon>Nitrosomonadaceae</taxon>
        <taxon>Nitrosospira</taxon>
    </lineage>
</organism>
<keyword id="KW-0489">Methyltransferase</keyword>
<keyword id="KW-1185">Reference proteome</keyword>
<keyword id="KW-0949">S-adenosyl-L-methionine</keyword>
<keyword id="KW-0808">Transferase</keyword>
<keyword id="KW-0831">Ubiquinone biosynthesis</keyword>
<reference key="1">
    <citation type="submission" date="2005-08" db="EMBL/GenBank/DDBJ databases">
        <title>Complete sequence of chromosome 1 of Nitrosospira multiformis ATCC 25196.</title>
        <authorList>
            <person name="Copeland A."/>
            <person name="Lucas S."/>
            <person name="Lapidus A."/>
            <person name="Barry K."/>
            <person name="Detter J.C."/>
            <person name="Glavina T."/>
            <person name="Hammon N."/>
            <person name="Israni S."/>
            <person name="Pitluck S."/>
            <person name="Chain P."/>
            <person name="Malfatti S."/>
            <person name="Shin M."/>
            <person name="Vergez L."/>
            <person name="Schmutz J."/>
            <person name="Larimer F."/>
            <person name="Land M."/>
            <person name="Hauser L."/>
            <person name="Kyrpides N."/>
            <person name="Lykidis A."/>
            <person name="Richardson P."/>
        </authorList>
    </citation>
    <scope>NUCLEOTIDE SEQUENCE [LARGE SCALE GENOMIC DNA]</scope>
    <source>
        <strain>ATCC 25196 / NCIMB 11849 / C 71</strain>
    </source>
</reference>
<name>UBIG_NITMU</name>
<evidence type="ECO:0000255" key="1">
    <source>
        <dbReference type="HAMAP-Rule" id="MF_00472"/>
    </source>
</evidence>
<gene>
    <name evidence="1" type="primary">ubiG</name>
    <name type="ordered locus">Nmul_A2186</name>
</gene>
<proteinExistence type="inferred from homology"/>
<feature type="chain" id="PRO_0000241715" description="Ubiquinone biosynthesis O-methyltransferase">
    <location>
        <begin position="1"/>
        <end position="239"/>
    </location>
</feature>
<feature type="binding site" evidence="1">
    <location>
        <position position="45"/>
    </location>
    <ligand>
        <name>S-adenosyl-L-methionine</name>
        <dbReference type="ChEBI" id="CHEBI:59789"/>
    </ligand>
</feature>
<feature type="binding site" evidence="1">
    <location>
        <position position="64"/>
    </location>
    <ligand>
        <name>S-adenosyl-L-methionine</name>
        <dbReference type="ChEBI" id="CHEBI:59789"/>
    </ligand>
</feature>
<feature type="binding site" evidence="1">
    <location>
        <position position="85"/>
    </location>
    <ligand>
        <name>S-adenosyl-L-methionine</name>
        <dbReference type="ChEBI" id="CHEBI:59789"/>
    </ligand>
</feature>
<feature type="binding site" evidence="1">
    <location>
        <position position="129"/>
    </location>
    <ligand>
        <name>S-adenosyl-L-methionine</name>
        <dbReference type="ChEBI" id="CHEBI:59789"/>
    </ligand>
</feature>
<comment type="function">
    <text evidence="1">O-methyltransferase that catalyzes the 2 O-methylation steps in the ubiquinone biosynthetic pathway.</text>
</comment>
<comment type="catalytic activity">
    <reaction evidence="1">
        <text>a 3-demethylubiquinol + S-adenosyl-L-methionine = a ubiquinol + S-adenosyl-L-homocysteine + H(+)</text>
        <dbReference type="Rhea" id="RHEA:44380"/>
        <dbReference type="Rhea" id="RHEA-COMP:9566"/>
        <dbReference type="Rhea" id="RHEA-COMP:10914"/>
        <dbReference type="ChEBI" id="CHEBI:15378"/>
        <dbReference type="ChEBI" id="CHEBI:17976"/>
        <dbReference type="ChEBI" id="CHEBI:57856"/>
        <dbReference type="ChEBI" id="CHEBI:59789"/>
        <dbReference type="ChEBI" id="CHEBI:84422"/>
        <dbReference type="EC" id="2.1.1.64"/>
    </reaction>
</comment>
<comment type="catalytic activity">
    <reaction evidence="1">
        <text>a 3-(all-trans-polyprenyl)benzene-1,2-diol + S-adenosyl-L-methionine = a 2-methoxy-6-(all-trans-polyprenyl)phenol + S-adenosyl-L-homocysteine + H(+)</text>
        <dbReference type="Rhea" id="RHEA:31411"/>
        <dbReference type="Rhea" id="RHEA-COMP:9550"/>
        <dbReference type="Rhea" id="RHEA-COMP:9551"/>
        <dbReference type="ChEBI" id="CHEBI:15378"/>
        <dbReference type="ChEBI" id="CHEBI:57856"/>
        <dbReference type="ChEBI" id="CHEBI:59789"/>
        <dbReference type="ChEBI" id="CHEBI:62729"/>
        <dbReference type="ChEBI" id="CHEBI:62731"/>
        <dbReference type="EC" id="2.1.1.222"/>
    </reaction>
</comment>
<comment type="pathway">
    <text evidence="1">Cofactor biosynthesis; ubiquinone biosynthesis.</text>
</comment>
<comment type="similarity">
    <text evidence="1">Belongs to the methyltransferase superfamily. UbiG/COQ3 family.</text>
</comment>
<dbReference type="EC" id="2.1.1.222" evidence="1"/>
<dbReference type="EC" id="2.1.1.64" evidence="1"/>
<dbReference type="EMBL" id="CP000103">
    <property type="protein sequence ID" value="ABB75478.1"/>
    <property type="molecule type" value="Genomic_DNA"/>
</dbReference>
<dbReference type="RefSeq" id="WP_011381485.1">
    <property type="nucleotide sequence ID" value="NC_007614.1"/>
</dbReference>
<dbReference type="SMR" id="Q2Y6Z3"/>
<dbReference type="STRING" id="323848.Nmul_A2186"/>
<dbReference type="KEGG" id="nmu:Nmul_A2186"/>
<dbReference type="eggNOG" id="COG2227">
    <property type="taxonomic scope" value="Bacteria"/>
</dbReference>
<dbReference type="HOGENOM" id="CLU_042432_5_0_4"/>
<dbReference type="UniPathway" id="UPA00232"/>
<dbReference type="Proteomes" id="UP000002718">
    <property type="component" value="Chromosome"/>
</dbReference>
<dbReference type="GO" id="GO:0102208">
    <property type="term" value="F:2-polyprenyl-6-hydroxyphenol methylase activity"/>
    <property type="evidence" value="ECO:0007669"/>
    <property type="project" value="UniProtKB-EC"/>
</dbReference>
<dbReference type="GO" id="GO:0061542">
    <property type="term" value="F:3-demethylubiquinol 3-O-methyltransferase activity"/>
    <property type="evidence" value="ECO:0007669"/>
    <property type="project" value="UniProtKB-UniRule"/>
</dbReference>
<dbReference type="GO" id="GO:0010420">
    <property type="term" value="F:polyprenyldihydroxybenzoate methyltransferase activity"/>
    <property type="evidence" value="ECO:0007669"/>
    <property type="project" value="InterPro"/>
</dbReference>
<dbReference type="GO" id="GO:0032259">
    <property type="term" value="P:methylation"/>
    <property type="evidence" value="ECO:0007669"/>
    <property type="project" value="UniProtKB-KW"/>
</dbReference>
<dbReference type="CDD" id="cd02440">
    <property type="entry name" value="AdoMet_MTases"/>
    <property type="match status" value="1"/>
</dbReference>
<dbReference type="FunFam" id="3.40.50.150:FF:000028">
    <property type="entry name" value="Ubiquinone biosynthesis O-methyltransferase"/>
    <property type="match status" value="1"/>
</dbReference>
<dbReference type="Gene3D" id="3.40.50.150">
    <property type="entry name" value="Vaccinia Virus protein VP39"/>
    <property type="match status" value="1"/>
</dbReference>
<dbReference type="HAMAP" id="MF_00472">
    <property type="entry name" value="UbiG"/>
    <property type="match status" value="1"/>
</dbReference>
<dbReference type="InterPro" id="IPR029063">
    <property type="entry name" value="SAM-dependent_MTases_sf"/>
</dbReference>
<dbReference type="InterPro" id="IPR010233">
    <property type="entry name" value="UbiG_MeTrfase"/>
</dbReference>
<dbReference type="NCBIfam" id="TIGR01983">
    <property type="entry name" value="UbiG"/>
    <property type="match status" value="1"/>
</dbReference>
<dbReference type="PANTHER" id="PTHR43464">
    <property type="entry name" value="METHYLTRANSFERASE"/>
    <property type="match status" value="1"/>
</dbReference>
<dbReference type="PANTHER" id="PTHR43464:SF19">
    <property type="entry name" value="UBIQUINONE BIOSYNTHESIS O-METHYLTRANSFERASE, MITOCHONDRIAL"/>
    <property type="match status" value="1"/>
</dbReference>
<dbReference type="Pfam" id="PF13489">
    <property type="entry name" value="Methyltransf_23"/>
    <property type="match status" value="1"/>
</dbReference>
<dbReference type="SUPFAM" id="SSF53335">
    <property type="entry name" value="S-adenosyl-L-methionine-dependent methyltransferases"/>
    <property type="match status" value="1"/>
</dbReference>
<sequence length="239" mass="26546">MMDKEIENGSVNVDLLELEKFNQLAHRWWDPNSEFKPLHEINPLRLGYIDRHARLAGKDVLDVGCGGGILSESMAESGAQVTGIDLGDKALKVAKLHLLESGNKVNYRKSSVEALAAEQPHHYDVVTCMEMLEHVPDPVSTVRACAELAKPGGWVFFSTINRNPKSYLFAVIGAEYVLNLLPRGTHDYAKFIKPSELGRMAREAGLDVQEVIGMSYNPITKVYSLGQDTDVNYIMAFRA</sequence>
<protein>
    <recommendedName>
        <fullName evidence="1">Ubiquinone biosynthesis O-methyltransferase</fullName>
    </recommendedName>
    <alternativeName>
        <fullName evidence="1">2-polyprenyl-6-hydroxyphenol methylase</fullName>
        <ecNumber evidence="1">2.1.1.222</ecNumber>
    </alternativeName>
    <alternativeName>
        <fullName evidence="1">3-demethylubiquinone 3-O-methyltransferase</fullName>
        <ecNumber evidence="1">2.1.1.64</ecNumber>
    </alternativeName>
</protein>